<name>CPXT1_TRIEI</name>
<reference key="1">
    <citation type="journal article" date="2015" name="Proc. Natl. Acad. Sci. U.S.A.">
        <title>Trichodesmium genome maintains abundant, widespread noncoding DNA in situ, despite oligotrophic lifestyle.</title>
        <authorList>
            <person name="Walworth N."/>
            <person name="Pfreundt U."/>
            <person name="Nelson W.C."/>
            <person name="Mincer T."/>
            <person name="Heidelberg J.F."/>
            <person name="Fu F."/>
            <person name="Waterbury J.B."/>
            <person name="Glavina del Rio T."/>
            <person name="Goodwin L."/>
            <person name="Kyrpides N.C."/>
            <person name="Land M.L."/>
            <person name="Woyke T."/>
            <person name="Hutchins D.A."/>
            <person name="Hess W.R."/>
            <person name="Webb E.A."/>
        </authorList>
    </citation>
    <scope>NUCLEOTIDE SEQUENCE [LARGE SCALE GENOMIC DNA]</scope>
    <source>
        <strain>IMS101</strain>
    </source>
</reference>
<protein>
    <recommendedName>
        <fullName evidence="1">Chromophore lyase CpcT/CpeT 1</fullName>
        <ecNumber evidence="1">4.-.-.-</ecNumber>
    </recommendedName>
</protein>
<comment type="function">
    <text evidence="1">Covalently attaches a chromophore to Cys residue(s) of phycobiliproteins.</text>
</comment>
<comment type="similarity">
    <text evidence="1">Belongs to the CpcT/CpeT biliprotein lyase family.</text>
</comment>
<gene>
    <name evidence="1" type="primary">cpcT1</name>
    <name type="ordered locus">Tery_0979</name>
</gene>
<proteinExistence type="inferred from homology"/>
<keyword id="KW-0456">Lyase</keyword>
<organism>
    <name type="scientific">Trichodesmium erythraeum (strain IMS101)</name>
    <dbReference type="NCBI Taxonomy" id="203124"/>
    <lineage>
        <taxon>Bacteria</taxon>
        <taxon>Bacillati</taxon>
        <taxon>Cyanobacteriota</taxon>
        <taxon>Cyanophyceae</taxon>
        <taxon>Oscillatoriophycideae</taxon>
        <taxon>Oscillatoriales</taxon>
        <taxon>Microcoleaceae</taxon>
        <taxon>Trichodesmium</taxon>
    </lineage>
</organism>
<sequence>MITSNFKTQENVSQAITLASWLAGEYSSIKYTLEDARTNPHIRIFFRPLPYDFFGGIGFYSEEIYDHDPWHPHYQFVKRVIPQGDSVRVENYALKDPDLHTGAGQDLEILATLTPDNIELRKGCAMIFKRQGDTFVGGVEPGHKCLIPRGDGSMTYLVSEVKVTQKTWTSRDTGYDVNTHEKIWGSNSGPFKFDKVQDFSGEIPDIAIL</sequence>
<feature type="chain" id="PRO_0000403169" description="Chromophore lyase CpcT/CpeT 1">
    <location>
        <begin position="1"/>
        <end position="209"/>
    </location>
</feature>
<dbReference type="EC" id="4.-.-.-" evidence="1"/>
<dbReference type="EMBL" id="CP000393">
    <property type="protein sequence ID" value="ABG50360.1"/>
    <property type="molecule type" value="Genomic_DNA"/>
</dbReference>
<dbReference type="RefSeq" id="WP_011610748.1">
    <property type="nucleotide sequence ID" value="NC_008312.1"/>
</dbReference>
<dbReference type="SMR" id="Q117G4"/>
<dbReference type="STRING" id="203124.Tery_0979"/>
<dbReference type="KEGG" id="ter:Tery_0979"/>
<dbReference type="eggNOG" id="ENOG502Z8CK">
    <property type="taxonomic scope" value="Bacteria"/>
</dbReference>
<dbReference type="HOGENOM" id="CLU_092589_0_0_3"/>
<dbReference type="OrthoDB" id="509174at2"/>
<dbReference type="GO" id="GO:0016829">
    <property type="term" value="F:lyase activity"/>
    <property type="evidence" value="ECO:0007669"/>
    <property type="project" value="UniProtKB-KW"/>
</dbReference>
<dbReference type="CDD" id="cd16338">
    <property type="entry name" value="CpcT"/>
    <property type="match status" value="1"/>
</dbReference>
<dbReference type="Gene3D" id="2.40.128.590">
    <property type="entry name" value="CpcT/CpeT domain"/>
    <property type="match status" value="1"/>
</dbReference>
<dbReference type="HAMAP" id="MF_01460">
    <property type="entry name" value="Chrphore_lyase_CpxT"/>
    <property type="match status" value="1"/>
</dbReference>
<dbReference type="InterPro" id="IPR010404">
    <property type="entry name" value="CpcT/CpeT"/>
</dbReference>
<dbReference type="InterPro" id="IPR038672">
    <property type="entry name" value="CpcT/CpeT_sf"/>
</dbReference>
<dbReference type="PANTHER" id="PTHR35137">
    <property type="entry name" value="CHROMOPHORE LYASE CRL, CHLOROPLASTIC"/>
    <property type="match status" value="1"/>
</dbReference>
<dbReference type="PANTHER" id="PTHR35137:SF1">
    <property type="entry name" value="CHROMOPHORE LYASE CRL, CHLOROPLASTIC"/>
    <property type="match status" value="1"/>
</dbReference>
<dbReference type="Pfam" id="PF06206">
    <property type="entry name" value="CpeT"/>
    <property type="match status" value="1"/>
</dbReference>
<accession>Q117G4</accession>
<evidence type="ECO:0000255" key="1">
    <source>
        <dbReference type="HAMAP-Rule" id="MF_01460"/>
    </source>
</evidence>